<accession>B4M7S0</accession>
<dbReference type="EC" id="3.1.3.16"/>
<dbReference type="EMBL" id="CH940653">
    <property type="protein sequence ID" value="EDW62837.1"/>
    <property type="molecule type" value="Genomic_DNA"/>
</dbReference>
<dbReference type="RefSeq" id="XP_002057351.1">
    <property type="nucleotide sequence ID" value="XM_002057315.4"/>
</dbReference>
<dbReference type="SMR" id="B4M7S0"/>
<dbReference type="FunCoup" id="B4M7S0">
    <property type="interactions" value="1020"/>
</dbReference>
<dbReference type="STRING" id="7244.B4M7S0"/>
<dbReference type="EnsemblMetazoa" id="FBtr0232966">
    <property type="protein sequence ID" value="FBpp0231458"/>
    <property type="gene ID" value="FBgn0204218"/>
</dbReference>
<dbReference type="EnsemblMetazoa" id="XM_002057315.3">
    <property type="protein sequence ID" value="XP_002057351.1"/>
    <property type="gene ID" value="LOC6633492"/>
</dbReference>
<dbReference type="GeneID" id="6633492"/>
<dbReference type="KEGG" id="dvi:6633492"/>
<dbReference type="CTD" id="192111"/>
<dbReference type="eggNOG" id="KOG4609">
    <property type="taxonomic scope" value="Eukaryota"/>
</dbReference>
<dbReference type="HOGENOM" id="CLU_063130_0_1_1"/>
<dbReference type="InParanoid" id="B4M7S0"/>
<dbReference type="OMA" id="MPMEMIT"/>
<dbReference type="OrthoDB" id="2118094at2759"/>
<dbReference type="PhylomeDB" id="B4M7S0"/>
<dbReference type="Proteomes" id="UP000008792">
    <property type="component" value="Unassembled WGS sequence"/>
</dbReference>
<dbReference type="GO" id="GO:0005741">
    <property type="term" value="C:mitochondrial outer membrane"/>
    <property type="evidence" value="ECO:0007669"/>
    <property type="project" value="UniProtKB-SubCell"/>
</dbReference>
<dbReference type="GO" id="GO:0019900">
    <property type="term" value="F:kinase binding"/>
    <property type="evidence" value="ECO:0007669"/>
    <property type="project" value="EnsemblMetazoa"/>
</dbReference>
<dbReference type="GO" id="GO:0004721">
    <property type="term" value="F:phosphoprotein phosphatase activity"/>
    <property type="evidence" value="ECO:0000250"/>
    <property type="project" value="UniProtKB"/>
</dbReference>
<dbReference type="GO" id="GO:0043539">
    <property type="term" value="F:protein serine/threonine kinase activator activity"/>
    <property type="evidence" value="ECO:0007669"/>
    <property type="project" value="EnsemblMetazoa"/>
</dbReference>
<dbReference type="GO" id="GO:0004722">
    <property type="term" value="F:protein serine/threonine phosphatase activity"/>
    <property type="evidence" value="ECO:0007669"/>
    <property type="project" value="UniProtKB-EC"/>
</dbReference>
<dbReference type="GO" id="GO:0090141">
    <property type="term" value="P:positive regulation of mitochondrial fission"/>
    <property type="evidence" value="ECO:0007669"/>
    <property type="project" value="EnsemblMetazoa"/>
</dbReference>
<dbReference type="GO" id="GO:0010636">
    <property type="term" value="P:positive regulation of mitochondrial fusion"/>
    <property type="evidence" value="ECO:0007669"/>
    <property type="project" value="EnsemblMetazoa"/>
</dbReference>
<dbReference type="GO" id="GO:0006470">
    <property type="term" value="P:protein dephosphorylation"/>
    <property type="evidence" value="ECO:0000250"/>
    <property type="project" value="UniProtKB"/>
</dbReference>
<dbReference type="GO" id="GO:0072347">
    <property type="term" value="P:response to anesthetic"/>
    <property type="evidence" value="ECO:0007669"/>
    <property type="project" value="EnsemblMetazoa"/>
</dbReference>
<dbReference type="GO" id="GO:0009408">
    <property type="term" value="P:response to heat"/>
    <property type="evidence" value="ECO:0007669"/>
    <property type="project" value="EnsemblMetazoa"/>
</dbReference>
<dbReference type="CDD" id="cd07067">
    <property type="entry name" value="HP_PGM_like"/>
    <property type="match status" value="1"/>
</dbReference>
<dbReference type="FunFam" id="3.40.50.1240:FF:000009">
    <property type="entry name" value="serine/threonine-protein phosphatase PGAM5, mitochondrial isoform X1"/>
    <property type="match status" value="1"/>
</dbReference>
<dbReference type="Gene3D" id="3.40.50.1240">
    <property type="entry name" value="Phosphoglycerate mutase-like"/>
    <property type="match status" value="1"/>
</dbReference>
<dbReference type="InterPro" id="IPR013078">
    <property type="entry name" value="His_Pase_superF_clade-1"/>
</dbReference>
<dbReference type="InterPro" id="IPR029033">
    <property type="entry name" value="His_PPase_superfam"/>
</dbReference>
<dbReference type="InterPro" id="IPR051021">
    <property type="entry name" value="Mito_Ser/Thr_phosphatase"/>
</dbReference>
<dbReference type="PANTHER" id="PTHR20935">
    <property type="entry name" value="PHOSPHOGLYCERATE MUTASE-RELATED"/>
    <property type="match status" value="1"/>
</dbReference>
<dbReference type="PANTHER" id="PTHR20935:SF0">
    <property type="entry name" value="SERINE_THREONINE-PROTEIN PHOSPHATASE PGAM5, MITOCHONDRIAL"/>
    <property type="match status" value="1"/>
</dbReference>
<dbReference type="Pfam" id="PF00300">
    <property type="entry name" value="His_Phos_1"/>
    <property type="match status" value="2"/>
</dbReference>
<dbReference type="SMART" id="SM00855">
    <property type="entry name" value="PGAM"/>
    <property type="match status" value="1"/>
</dbReference>
<dbReference type="SUPFAM" id="SSF53254">
    <property type="entry name" value="Phosphoglycerate mutase-like"/>
    <property type="match status" value="1"/>
</dbReference>
<organism>
    <name type="scientific">Drosophila virilis</name>
    <name type="common">Fruit fly</name>
    <dbReference type="NCBI Taxonomy" id="7244"/>
    <lineage>
        <taxon>Eukaryota</taxon>
        <taxon>Metazoa</taxon>
        <taxon>Ecdysozoa</taxon>
        <taxon>Arthropoda</taxon>
        <taxon>Hexapoda</taxon>
        <taxon>Insecta</taxon>
        <taxon>Pterygota</taxon>
        <taxon>Neoptera</taxon>
        <taxon>Endopterygota</taxon>
        <taxon>Diptera</taxon>
        <taxon>Brachycera</taxon>
        <taxon>Muscomorpha</taxon>
        <taxon>Ephydroidea</taxon>
        <taxon>Drosophilidae</taxon>
        <taxon>Drosophila</taxon>
    </lineage>
</organism>
<name>PGAM5_DROVI</name>
<protein>
    <recommendedName>
        <fullName evidence="2">Serine/threonine-protein phosphatase Pgam5, mitochondrial</fullName>
        <ecNumber>3.1.3.16</ecNumber>
    </recommendedName>
    <alternativeName>
        <fullName evidence="2">Phosphoglycerate mutase family member 5 homolog</fullName>
    </alternativeName>
</protein>
<gene>
    <name evidence="2" type="primary">Pgam5</name>
    <name type="ORF">GJ17041</name>
</gene>
<sequence>MRKFTAFACGTGAGLAAYYLQKLRDPQLAVHNSWTNSDRPISECALWDSNWDFRDPKSLVRPQKNDLPQEQNRYNSDLEKHVAKSARHIILIRHGEYLDVGDSDDTHHLTDRGRLQAKYTGQRLRELGIKWDKVIASNMVRAQETADIILNQIDYDKAKLKHCSYLREGAPIPPQPPVGHWKPEASQFFRDGARIEAAFRRYFHRALPEQEKESYTLIVGHGNVIRYFVCRALQFPAEAWLRISINHASITWLTISPSGNVSIKYLGDTGFMPAKYLTHRIPRDAKNVV</sequence>
<keyword id="KW-0378">Hydrolase</keyword>
<keyword id="KW-0472">Membrane</keyword>
<keyword id="KW-0496">Mitochondrion</keyword>
<keyword id="KW-1000">Mitochondrion outer membrane</keyword>
<keyword id="KW-1185">Reference proteome</keyword>
<keyword id="KW-0812">Transmembrane</keyword>
<keyword id="KW-1133">Transmembrane helix</keyword>
<proteinExistence type="inferred from homology"/>
<comment type="function">
    <text evidence="2">Displays phosphatase activity for serine/threonine residues, and dephosphorylates and activates Pk92B kinase. Has apparently no phosphoglycerate mutase activity (By similarity).</text>
</comment>
<comment type="catalytic activity">
    <reaction>
        <text>O-phospho-L-seryl-[protein] + H2O = L-seryl-[protein] + phosphate</text>
        <dbReference type="Rhea" id="RHEA:20629"/>
        <dbReference type="Rhea" id="RHEA-COMP:9863"/>
        <dbReference type="Rhea" id="RHEA-COMP:11604"/>
        <dbReference type="ChEBI" id="CHEBI:15377"/>
        <dbReference type="ChEBI" id="CHEBI:29999"/>
        <dbReference type="ChEBI" id="CHEBI:43474"/>
        <dbReference type="ChEBI" id="CHEBI:83421"/>
        <dbReference type="EC" id="3.1.3.16"/>
    </reaction>
</comment>
<comment type="catalytic activity">
    <reaction>
        <text>O-phospho-L-threonyl-[protein] + H2O = L-threonyl-[protein] + phosphate</text>
        <dbReference type="Rhea" id="RHEA:47004"/>
        <dbReference type="Rhea" id="RHEA-COMP:11060"/>
        <dbReference type="Rhea" id="RHEA-COMP:11605"/>
        <dbReference type="ChEBI" id="CHEBI:15377"/>
        <dbReference type="ChEBI" id="CHEBI:30013"/>
        <dbReference type="ChEBI" id="CHEBI:43474"/>
        <dbReference type="ChEBI" id="CHEBI:61977"/>
        <dbReference type="EC" id="3.1.3.16"/>
    </reaction>
</comment>
<comment type="subunit">
    <text evidence="2">Interacts with Pk92B/ASK1.</text>
</comment>
<comment type="subcellular location">
    <subcellularLocation>
        <location evidence="2 3">Mitochondrion outer membrane</location>
        <topology evidence="1">Single-pass membrane protein</topology>
    </subcellularLocation>
</comment>
<comment type="similarity">
    <text evidence="3">Belongs to the phosphoglycerate mutase family. BPG-dependent PGAM subfamily.</text>
</comment>
<reference evidence="4" key="1">
    <citation type="journal article" date="2007" name="Nature">
        <title>Evolution of genes and genomes on the Drosophila phylogeny.</title>
        <authorList>
            <consortium name="Drosophila 12 genomes consortium"/>
        </authorList>
    </citation>
    <scope>NUCLEOTIDE SEQUENCE [LARGE SCALE GENOMIC DNA]</scope>
    <source>
        <strain evidence="4">Tucson 15010-1051.87</strain>
    </source>
</reference>
<evidence type="ECO:0000250" key="1"/>
<evidence type="ECO:0000250" key="2">
    <source>
        <dbReference type="UniProtKB" id="O46084"/>
    </source>
</evidence>
<evidence type="ECO:0000255" key="3"/>
<evidence type="ECO:0000312" key="4">
    <source>
        <dbReference type="EMBL" id="EDW62837.1"/>
    </source>
</evidence>
<feature type="chain" id="PRO_0000390710" description="Serine/threonine-protein phosphatase Pgam5, mitochondrial">
    <location>
        <begin position="1"/>
        <end position="289"/>
    </location>
</feature>
<feature type="transmembrane region" description="Helical" evidence="3">
    <location>
        <begin position="7"/>
        <end position="23"/>
    </location>
</feature>